<dbReference type="EMBL" id="CP000918">
    <property type="protein sequence ID" value="ACO16267.1"/>
    <property type="molecule type" value="Genomic_DNA"/>
</dbReference>
<dbReference type="RefSeq" id="WP_000782680.1">
    <property type="nucleotide sequence ID" value="NC_012468.1"/>
</dbReference>
<dbReference type="SMR" id="C1C7W3"/>
<dbReference type="KEGG" id="snm:SP70585_1401"/>
<dbReference type="HOGENOM" id="CLU_071496_1_0_9"/>
<dbReference type="Proteomes" id="UP000002211">
    <property type="component" value="Chromosome"/>
</dbReference>
<dbReference type="GO" id="GO:0030674">
    <property type="term" value="F:protein-macromolecule adaptor activity"/>
    <property type="evidence" value="ECO:0007669"/>
    <property type="project" value="UniProtKB-UniRule"/>
</dbReference>
<dbReference type="Gene3D" id="3.30.70.1950">
    <property type="match status" value="1"/>
</dbReference>
<dbReference type="HAMAP" id="MF_01124">
    <property type="entry name" value="MecA"/>
    <property type="match status" value="1"/>
</dbReference>
<dbReference type="InterPro" id="IPR038471">
    <property type="entry name" value="MecA_C_sf"/>
</dbReference>
<dbReference type="InterPro" id="IPR008681">
    <property type="entry name" value="Neg-reg_MecA"/>
</dbReference>
<dbReference type="NCBIfam" id="NF002643">
    <property type="entry name" value="PRK02315.1-4"/>
    <property type="match status" value="1"/>
</dbReference>
<dbReference type="PANTHER" id="PTHR39161">
    <property type="entry name" value="ADAPTER PROTEIN MECA"/>
    <property type="match status" value="1"/>
</dbReference>
<dbReference type="PANTHER" id="PTHR39161:SF1">
    <property type="entry name" value="ADAPTER PROTEIN MECA 1"/>
    <property type="match status" value="1"/>
</dbReference>
<dbReference type="Pfam" id="PF05389">
    <property type="entry name" value="MecA"/>
    <property type="match status" value="1"/>
</dbReference>
<dbReference type="PIRSF" id="PIRSF029008">
    <property type="entry name" value="MecA"/>
    <property type="match status" value="1"/>
</dbReference>
<gene>
    <name evidence="1" type="primary">mecA</name>
    <name type="ordered locus">SP70585_1401</name>
</gene>
<comment type="function">
    <text evidence="1">Enables the recognition and targeting of unfolded and aggregated proteins to the ClpC protease or to other proteins involved in proteolysis.</text>
</comment>
<comment type="subunit">
    <text evidence="1">Homodimer.</text>
</comment>
<comment type="domain">
    <text>The N-terminal domain probably binds unfolded/aggregated proteins; the C-terminal domain interacts with ClpC.</text>
</comment>
<comment type="similarity">
    <text evidence="1">Belongs to the MecA family.</text>
</comment>
<organism>
    <name type="scientific">Streptococcus pneumoniae (strain 70585)</name>
    <dbReference type="NCBI Taxonomy" id="488221"/>
    <lineage>
        <taxon>Bacteria</taxon>
        <taxon>Bacillati</taxon>
        <taxon>Bacillota</taxon>
        <taxon>Bacilli</taxon>
        <taxon>Lactobacillales</taxon>
        <taxon>Streptococcaceae</taxon>
        <taxon>Streptococcus</taxon>
    </lineage>
</organism>
<accession>C1C7W3</accession>
<proteinExistence type="inferred from homology"/>
<reference key="1">
    <citation type="journal article" date="2010" name="Genome Biol.">
        <title>Structure and dynamics of the pan-genome of Streptococcus pneumoniae and closely related species.</title>
        <authorList>
            <person name="Donati C."/>
            <person name="Hiller N.L."/>
            <person name="Tettelin H."/>
            <person name="Muzzi A."/>
            <person name="Croucher N.J."/>
            <person name="Angiuoli S.V."/>
            <person name="Oggioni M."/>
            <person name="Dunning Hotopp J.C."/>
            <person name="Hu F.Z."/>
            <person name="Riley D.R."/>
            <person name="Covacci A."/>
            <person name="Mitchell T.J."/>
            <person name="Bentley S.D."/>
            <person name="Kilian M."/>
            <person name="Ehrlich G.D."/>
            <person name="Rappuoli R."/>
            <person name="Moxon E.R."/>
            <person name="Masignani V."/>
        </authorList>
    </citation>
    <scope>NUCLEOTIDE SEQUENCE [LARGE SCALE GENOMIC DNA]</scope>
    <source>
        <strain>70585</strain>
    </source>
</reference>
<protein>
    <recommendedName>
        <fullName evidence="1">Adapter protein MecA</fullName>
    </recommendedName>
</protein>
<evidence type="ECO:0000255" key="1">
    <source>
        <dbReference type="HAMAP-Rule" id="MF_01124"/>
    </source>
</evidence>
<name>MECA_STRP7</name>
<feature type="chain" id="PRO_1000164055" description="Adapter protein MecA">
    <location>
        <begin position="1"/>
        <end position="245"/>
    </location>
</feature>
<sequence>MKMKQISDTTLKITMSLEDLMDRGMEIADFLVPQEKTEEFFYAILDELEMPDSFLDTGMLSFRVTPKPDKVDVFVTKSKIDQNLDFEDLSDLPDMEELAQMSPDEFIKTLEKSIADKTKDDIEAIQSLEQVEAKEEEQEQAEQEAESKKEPYIYYILSFAKLADLVVFAKTVTFEMETSELYKMNERYYLTILVDIENHPSPYPAWLLARMREFADDSDISRSVLQEYGQVLMSHDAVLNLQKIG</sequence>